<organism>
    <name type="scientific">Streptococcus gordonii (strain Challis / ATCC 35105 / BCRC 15272 / CH1 / DL1 / V288)</name>
    <dbReference type="NCBI Taxonomy" id="467705"/>
    <lineage>
        <taxon>Bacteria</taxon>
        <taxon>Bacillati</taxon>
        <taxon>Bacillota</taxon>
        <taxon>Bacilli</taxon>
        <taxon>Lactobacillales</taxon>
        <taxon>Streptococcaceae</taxon>
        <taxon>Streptococcus</taxon>
    </lineage>
</organism>
<dbReference type="EMBL" id="CP000725">
    <property type="protein sequence ID" value="ABV09922.1"/>
    <property type="molecule type" value="Genomic_DNA"/>
</dbReference>
<dbReference type="SMR" id="A8AZK9"/>
<dbReference type="STRING" id="467705.SGO_1969"/>
<dbReference type="KEGG" id="sgo:SGO_1969"/>
<dbReference type="eggNOG" id="COG0256">
    <property type="taxonomic scope" value="Bacteria"/>
</dbReference>
<dbReference type="HOGENOM" id="CLU_098841_0_1_9"/>
<dbReference type="Proteomes" id="UP000001131">
    <property type="component" value="Chromosome"/>
</dbReference>
<dbReference type="GO" id="GO:0022625">
    <property type="term" value="C:cytosolic large ribosomal subunit"/>
    <property type="evidence" value="ECO:0007669"/>
    <property type="project" value="TreeGrafter"/>
</dbReference>
<dbReference type="GO" id="GO:0008097">
    <property type="term" value="F:5S rRNA binding"/>
    <property type="evidence" value="ECO:0007669"/>
    <property type="project" value="TreeGrafter"/>
</dbReference>
<dbReference type="GO" id="GO:0003735">
    <property type="term" value="F:structural constituent of ribosome"/>
    <property type="evidence" value="ECO:0007669"/>
    <property type="project" value="InterPro"/>
</dbReference>
<dbReference type="GO" id="GO:0006412">
    <property type="term" value="P:translation"/>
    <property type="evidence" value="ECO:0007669"/>
    <property type="project" value="UniProtKB-UniRule"/>
</dbReference>
<dbReference type="CDD" id="cd00432">
    <property type="entry name" value="Ribosomal_L18_L5e"/>
    <property type="match status" value="1"/>
</dbReference>
<dbReference type="FunFam" id="3.30.420.100:FF:000001">
    <property type="entry name" value="50S ribosomal protein L18"/>
    <property type="match status" value="1"/>
</dbReference>
<dbReference type="Gene3D" id="3.30.420.100">
    <property type="match status" value="1"/>
</dbReference>
<dbReference type="HAMAP" id="MF_01337_B">
    <property type="entry name" value="Ribosomal_uL18_B"/>
    <property type="match status" value="1"/>
</dbReference>
<dbReference type="InterPro" id="IPR004389">
    <property type="entry name" value="Ribosomal_uL18_bac-type"/>
</dbReference>
<dbReference type="InterPro" id="IPR005484">
    <property type="entry name" value="Ribosomal_uL18_bac/euk"/>
</dbReference>
<dbReference type="NCBIfam" id="TIGR00060">
    <property type="entry name" value="L18_bact"/>
    <property type="match status" value="1"/>
</dbReference>
<dbReference type="PANTHER" id="PTHR12899">
    <property type="entry name" value="39S RIBOSOMAL PROTEIN L18, MITOCHONDRIAL"/>
    <property type="match status" value="1"/>
</dbReference>
<dbReference type="PANTHER" id="PTHR12899:SF3">
    <property type="entry name" value="LARGE RIBOSOMAL SUBUNIT PROTEIN UL18M"/>
    <property type="match status" value="1"/>
</dbReference>
<dbReference type="Pfam" id="PF00861">
    <property type="entry name" value="Ribosomal_L18p"/>
    <property type="match status" value="1"/>
</dbReference>
<dbReference type="SUPFAM" id="SSF53137">
    <property type="entry name" value="Translational machinery components"/>
    <property type="match status" value="1"/>
</dbReference>
<sequence>MITKPDKNKVRQKRHRRVRGKLSGTADRPRLNVFRSNTGIYAQVIDDVAGVTLASASTLDKEVSKGTKTEQAVVVGKLVAERAVAKGISEVVFDRGGYLYHGRVKALADAARENGLKF</sequence>
<reference key="1">
    <citation type="journal article" date="2007" name="J. Bacteriol.">
        <title>Genome-wide transcriptional changes in Streptococcus gordonii in response to competence signaling peptide.</title>
        <authorList>
            <person name="Vickerman M.M."/>
            <person name="Iobst S."/>
            <person name="Jesionowski A.M."/>
            <person name="Gill S.R."/>
        </authorList>
    </citation>
    <scope>NUCLEOTIDE SEQUENCE [LARGE SCALE GENOMIC DNA]</scope>
    <source>
        <strain>Challis / ATCC 35105 / BCRC 15272 / CH1 / DL1 / V288</strain>
    </source>
</reference>
<gene>
    <name evidence="1" type="primary">rplR</name>
    <name type="ordered locus">SGO_1969</name>
</gene>
<protein>
    <recommendedName>
        <fullName evidence="1">Large ribosomal subunit protein uL18</fullName>
    </recommendedName>
    <alternativeName>
        <fullName evidence="3">50S ribosomal protein L18</fullName>
    </alternativeName>
</protein>
<name>RL18_STRGC</name>
<proteinExistence type="inferred from homology"/>
<keyword id="KW-1185">Reference proteome</keyword>
<keyword id="KW-0687">Ribonucleoprotein</keyword>
<keyword id="KW-0689">Ribosomal protein</keyword>
<keyword id="KW-0694">RNA-binding</keyword>
<keyword id="KW-0699">rRNA-binding</keyword>
<evidence type="ECO:0000255" key="1">
    <source>
        <dbReference type="HAMAP-Rule" id="MF_01337"/>
    </source>
</evidence>
<evidence type="ECO:0000256" key="2">
    <source>
        <dbReference type="SAM" id="MobiDB-lite"/>
    </source>
</evidence>
<evidence type="ECO:0000305" key="3"/>
<accession>A8AZK9</accession>
<comment type="function">
    <text evidence="1">This is one of the proteins that bind and probably mediate the attachment of the 5S RNA into the large ribosomal subunit, where it forms part of the central protuberance.</text>
</comment>
<comment type="subunit">
    <text evidence="1">Part of the 50S ribosomal subunit; part of the 5S rRNA/L5/L18/L25 subcomplex. Contacts the 5S and 23S rRNAs.</text>
</comment>
<comment type="similarity">
    <text evidence="1">Belongs to the universal ribosomal protein uL18 family.</text>
</comment>
<feature type="chain" id="PRO_1000086693" description="Large ribosomal subunit protein uL18">
    <location>
        <begin position="1"/>
        <end position="118"/>
    </location>
</feature>
<feature type="region of interest" description="Disordered" evidence="2">
    <location>
        <begin position="1"/>
        <end position="25"/>
    </location>
</feature>
<feature type="compositionally biased region" description="Basic residues" evidence="2">
    <location>
        <begin position="10"/>
        <end position="20"/>
    </location>
</feature>